<comment type="similarity">
    <text evidence="2">Belongs to the sulfur carrier protein TusA family.</text>
</comment>
<name>Y990_METJA</name>
<protein>
    <recommendedName>
        <fullName>Putative sulfur carrier protein MJ0990</fullName>
    </recommendedName>
</protein>
<sequence length="75" mass="8465">MVIAMKKLDVTGDICPVPVLKTKKALEELNEGEELEVVGDYKPALENIKRFAENNGYTVVLAEETESRFRIVIKK</sequence>
<reference key="1">
    <citation type="journal article" date="1996" name="Science">
        <title>Complete genome sequence of the methanogenic archaeon, Methanococcus jannaschii.</title>
        <authorList>
            <person name="Bult C.J."/>
            <person name="White O."/>
            <person name="Olsen G.J."/>
            <person name="Zhou L."/>
            <person name="Fleischmann R.D."/>
            <person name="Sutton G.G."/>
            <person name="Blake J.A."/>
            <person name="FitzGerald L.M."/>
            <person name="Clayton R.A."/>
            <person name="Gocayne J.D."/>
            <person name="Kerlavage A.R."/>
            <person name="Dougherty B.A."/>
            <person name="Tomb J.-F."/>
            <person name="Adams M.D."/>
            <person name="Reich C.I."/>
            <person name="Overbeek R."/>
            <person name="Kirkness E.F."/>
            <person name="Weinstock K.G."/>
            <person name="Merrick J.M."/>
            <person name="Glodek A."/>
            <person name="Scott J.L."/>
            <person name="Geoghagen N.S.M."/>
            <person name="Weidman J.F."/>
            <person name="Fuhrmann J.L."/>
            <person name="Nguyen D."/>
            <person name="Utterback T.R."/>
            <person name="Kelley J.M."/>
            <person name="Peterson J.D."/>
            <person name="Sadow P.W."/>
            <person name="Hanna M.C."/>
            <person name="Cotton M.D."/>
            <person name="Roberts K.M."/>
            <person name="Hurst M.A."/>
            <person name="Kaine B.P."/>
            <person name="Borodovsky M."/>
            <person name="Klenk H.-P."/>
            <person name="Fraser C.M."/>
            <person name="Smith H.O."/>
            <person name="Woese C.R."/>
            <person name="Venter J.C."/>
        </authorList>
    </citation>
    <scope>NUCLEOTIDE SEQUENCE [LARGE SCALE GENOMIC DNA]</scope>
    <source>
        <strain>ATCC 43067 / DSM 2661 / JAL-1 / JCM 10045 / NBRC 100440</strain>
    </source>
</reference>
<dbReference type="EMBL" id="L77117">
    <property type="protein sequence ID" value="AAB98992.1"/>
    <property type="molecule type" value="Genomic_DNA"/>
</dbReference>
<dbReference type="PIR" id="F64423">
    <property type="entry name" value="F64423"/>
</dbReference>
<dbReference type="SMR" id="Q58397"/>
<dbReference type="FunCoup" id="Q58397">
    <property type="interactions" value="5"/>
</dbReference>
<dbReference type="STRING" id="243232.MJ_0990"/>
<dbReference type="PaxDb" id="243232-MJ_0990"/>
<dbReference type="EnsemblBacteria" id="AAB98992">
    <property type="protein sequence ID" value="AAB98992"/>
    <property type="gene ID" value="MJ_0990"/>
</dbReference>
<dbReference type="KEGG" id="mja:MJ_0990"/>
<dbReference type="eggNOG" id="arCOG02062">
    <property type="taxonomic scope" value="Archaea"/>
</dbReference>
<dbReference type="HOGENOM" id="CLU_165255_0_1_2"/>
<dbReference type="InParanoid" id="Q58397"/>
<dbReference type="PhylomeDB" id="Q58397"/>
<dbReference type="Proteomes" id="UP000000805">
    <property type="component" value="Chromosome"/>
</dbReference>
<dbReference type="CDD" id="cd00291">
    <property type="entry name" value="SirA_YedF_YeeD"/>
    <property type="match status" value="1"/>
</dbReference>
<dbReference type="Gene3D" id="3.30.110.40">
    <property type="entry name" value="TusA-like domain"/>
    <property type="match status" value="1"/>
</dbReference>
<dbReference type="InterPro" id="IPR001455">
    <property type="entry name" value="TusA-like"/>
</dbReference>
<dbReference type="InterPro" id="IPR036868">
    <property type="entry name" value="TusA-like_sf"/>
</dbReference>
<dbReference type="PANTHER" id="PTHR33279:SF18">
    <property type="entry name" value="SULFUR CARRIER PROTEIN MJ0990-RELATED"/>
    <property type="match status" value="1"/>
</dbReference>
<dbReference type="PANTHER" id="PTHR33279">
    <property type="entry name" value="SULFUR CARRIER PROTEIN YEDF-RELATED"/>
    <property type="match status" value="1"/>
</dbReference>
<dbReference type="Pfam" id="PF01206">
    <property type="entry name" value="TusA"/>
    <property type="match status" value="1"/>
</dbReference>
<dbReference type="SUPFAM" id="SSF64307">
    <property type="entry name" value="SirA-like"/>
    <property type="match status" value="1"/>
</dbReference>
<dbReference type="PROSITE" id="PS01148">
    <property type="entry name" value="UPF0033"/>
    <property type="match status" value="1"/>
</dbReference>
<feature type="chain" id="PRO_0000159080" description="Putative sulfur carrier protein MJ0990">
    <location>
        <begin position="1"/>
        <end position="75"/>
    </location>
</feature>
<feature type="active site" description="Cysteine persulfide intermediate" evidence="1">
    <location>
        <position position="15"/>
    </location>
</feature>
<proteinExistence type="inferred from homology"/>
<keyword id="KW-1185">Reference proteome</keyword>
<gene>
    <name type="ordered locus">MJ0990</name>
</gene>
<organism>
    <name type="scientific">Methanocaldococcus jannaschii (strain ATCC 43067 / DSM 2661 / JAL-1 / JCM 10045 / NBRC 100440)</name>
    <name type="common">Methanococcus jannaschii</name>
    <dbReference type="NCBI Taxonomy" id="243232"/>
    <lineage>
        <taxon>Archaea</taxon>
        <taxon>Methanobacteriati</taxon>
        <taxon>Methanobacteriota</taxon>
        <taxon>Methanomada group</taxon>
        <taxon>Methanococci</taxon>
        <taxon>Methanococcales</taxon>
        <taxon>Methanocaldococcaceae</taxon>
        <taxon>Methanocaldococcus</taxon>
    </lineage>
</organism>
<evidence type="ECO:0000250" key="1">
    <source>
        <dbReference type="UniProtKB" id="P0A890"/>
    </source>
</evidence>
<evidence type="ECO:0000305" key="2"/>
<accession>Q58397</accession>